<evidence type="ECO:0000250" key="1">
    <source>
        <dbReference type="UniProtKB" id="D4N500"/>
    </source>
</evidence>
<evidence type="ECO:0000250" key="2">
    <source>
        <dbReference type="UniProtKB" id="Q9LHN8"/>
    </source>
</evidence>
<evidence type="ECO:0000255" key="3">
    <source>
        <dbReference type="PROSITE-ProRule" id="PRU00805"/>
    </source>
</evidence>
<evidence type="ECO:0000269" key="4">
    <source>
    </source>
</evidence>
<evidence type="ECO:0000303" key="5">
    <source>
    </source>
</evidence>
<evidence type="ECO:0000305" key="6"/>
<evidence type="ECO:0000305" key="7">
    <source>
    </source>
</evidence>
<evidence type="ECO:0000312" key="8">
    <source>
        <dbReference type="Araport" id="AT3G12900"/>
    </source>
</evidence>
<evidence type="ECO:0000312" key="9">
    <source>
        <dbReference type="EMBL" id="AAF34829.1"/>
    </source>
</evidence>
<name>S8H_ARATH</name>
<protein>
    <recommendedName>
        <fullName evidence="5">Scopoletin 8-hydroxylase</fullName>
        <ecNumber evidence="3 4">1.14.11.60</ecNumber>
    </recommendedName>
    <alternativeName>
        <fullName evidence="7">2-oxoglutarate-dependent dioxygenase S8H</fullName>
    </alternativeName>
</protein>
<feature type="chain" id="PRO_0000446019" description="Scopoletin 8-hydroxylase">
    <location>
        <begin position="1"/>
        <end position="357"/>
    </location>
</feature>
<feature type="domain" description="Fe2OG dioxygenase" evidence="3">
    <location>
        <begin position="206"/>
        <end position="307"/>
    </location>
</feature>
<feature type="binding site" evidence="1">
    <location>
        <position position="216"/>
    </location>
    <ligand>
        <name>2-oxoglutarate</name>
        <dbReference type="ChEBI" id="CHEBI:16810"/>
    </ligand>
</feature>
<feature type="binding site" evidence="3">
    <location>
        <position position="231"/>
    </location>
    <ligand>
        <name>Fe cation</name>
        <dbReference type="ChEBI" id="CHEBI:24875"/>
    </ligand>
</feature>
<feature type="binding site" evidence="3">
    <location>
        <position position="233"/>
    </location>
    <ligand>
        <name>Fe cation</name>
        <dbReference type="ChEBI" id="CHEBI:24875"/>
    </ligand>
</feature>
<feature type="binding site" evidence="3">
    <location>
        <position position="288"/>
    </location>
    <ligand>
        <name>Fe cation</name>
        <dbReference type="ChEBI" id="CHEBI:24875"/>
    </ligand>
</feature>
<feature type="binding site" evidence="3">
    <location>
        <position position="298"/>
    </location>
    <ligand>
        <name>2-oxoglutarate</name>
        <dbReference type="ChEBI" id="CHEBI:16810"/>
    </ligand>
</feature>
<feature type="binding site" evidence="1">
    <location>
        <position position="300"/>
    </location>
    <ligand>
        <name>2-oxoglutarate</name>
        <dbReference type="ChEBI" id="CHEBI:16810"/>
    </ligand>
</feature>
<sequence length="357" mass="39716">MGINFEDQTTLFNFVVREGNGVKGMIDSGLSSVPRPFVQPLSERIPTQKALTCEATQPIDLSNLDGPQHKEVAKQIVEAAETLGFFQVVNHGVSVELLELLKSSAHEFFAQAPEEKSMYLKEVSPSKLVKYGTSFVPDKEKAIEWKDYVSMLYTNDSEALQHWPQPCREVALEFLNSSMEMVKNVVNILMENVGVTLEEEKMNGLMGTKMVNMNYYPTCPSPELTVGVGRHSDMGMLTVLLQDGIGGLYVKLDNGEWAEIPPVHGALVINIGDTLQILSNGKYKSAEHRVRTTNIGSRVSVPIFTAPNPSQKVGPLPEVVKRDGVARYKEFLFQDYMNNFFGQPHDGKKSLDFARAE</sequence>
<dbReference type="EC" id="1.14.11.60" evidence="3 4"/>
<dbReference type="EMBL" id="AP000385">
    <property type="protein sequence ID" value="BAB01419.1"/>
    <property type="molecule type" value="Genomic_DNA"/>
</dbReference>
<dbReference type="EMBL" id="AC023838">
    <property type="protein sequence ID" value="AAF34829.1"/>
    <property type="molecule type" value="Genomic_DNA"/>
</dbReference>
<dbReference type="EMBL" id="CP002686">
    <property type="protein sequence ID" value="AEE75258.1"/>
    <property type="molecule type" value="Genomic_DNA"/>
</dbReference>
<dbReference type="EMBL" id="DQ446658">
    <property type="protein sequence ID" value="ABE65937.1"/>
    <property type="molecule type" value="mRNA"/>
</dbReference>
<dbReference type="EMBL" id="DQ653080">
    <property type="protein sequence ID" value="ABK28555.1"/>
    <property type="status" value="ALT_SEQ"/>
    <property type="molecule type" value="mRNA"/>
</dbReference>
<dbReference type="RefSeq" id="NP_187896.1">
    <property type="nucleotide sequence ID" value="NM_112126.2"/>
</dbReference>
<dbReference type="SMR" id="Q9LE86"/>
<dbReference type="STRING" id="3702.Q9LE86"/>
<dbReference type="PaxDb" id="3702-AT3G12900.1"/>
<dbReference type="ProteomicsDB" id="189217"/>
<dbReference type="EnsemblPlants" id="AT3G12900.1">
    <property type="protein sequence ID" value="AT3G12900.1"/>
    <property type="gene ID" value="AT3G12900"/>
</dbReference>
<dbReference type="GeneID" id="820473"/>
<dbReference type="Gramene" id="AT3G12900.1">
    <property type="protein sequence ID" value="AT3G12900.1"/>
    <property type="gene ID" value="AT3G12900"/>
</dbReference>
<dbReference type="KEGG" id="ath:AT3G12900"/>
<dbReference type="Araport" id="AT3G12900"/>
<dbReference type="TAIR" id="AT3G12900">
    <property type="gene designation" value="S8H"/>
</dbReference>
<dbReference type="eggNOG" id="KOG0143">
    <property type="taxonomic scope" value="Eukaryota"/>
</dbReference>
<dbReference type="HOGENOM" id="CLU_010119_16_4_1"/>
<dbReference type="InParanoid" id="Q9LE86"/>
<dbReference type="OMA" id="WPNQCKE"/>
<dbReference type="PhylomeDB" id="Q9LE86"/>
<dbReference type="BioCyc" id="ARA:AT3G12900-MONOMER"/>
<dbReference type="BioCyc" id="MetaCyc:AT3G12900-MONOMER"/>
<dbReference type="BRENDA" id="1.14.11.60">
    <property type="organism ID" value="399"/>
</dbReference>
<dbReference type="PRO" id="PR:Q9LE86"/>
<dbReference type="Proteomes" id="UP000006548">
    <property type="component" value="Chromosome 3"/>
</dbReference>
<dbReference type="ExpressionAtlas" id="Q9LE86">
    <property type="expression patterns" value="baseline and differential"/>
</dbReference>
<dbReference type="GO" id="GO:0016706">
    <property type="term" value="F:2-oxoglutarate-dependent dioxygenase activity"/>
    <property type="evidence" value="ECO:0000314"/>
    <property type="project" value="TAIR"/>
</dbReference>
<dbReference type="GO" id="GO:0051213">
    <property type="term" value="F:dioxygenase activity"/>
    <property type="evidence" value="ECO:0000314"/>
    <property type="project" value="TAIR"/>
</dbReference>
<dbReference type="GO" id="GO:0046872">
    <property type="term" value="F:metal ion binding"/>
    <property type="evidence" value="ECO:0007669"/>
    <property type="project" value="UniProtKB-KW"/>
</dbReference>
<dbReference type="GO" id="GO:0106145">
    <property type="term" value="F:scopoletin 8-hydroxylase activity"/>
    <property type="evidence" value="ECO:0000314"/>
    <property type="project" value="TAIR"/>
</dbReference>
<dbReference type="GO" id="GO:0009805">
    <property type="term" value="P:coumarin biosynthetic process"/>
    <property type="evidence" value="ECO:0000314"/>
    <property type="project" value="TAIR"/>
</dbReference>
<dbReference type="GO" id="GO:0106147">
    <property type="term" value="P:fraxetin biosynthesis"/>
    <property type="evidence" value="ECO:0000314"/>
    <property type="project" value="TAIR"/>
</dbReference>
<dbReference type="GO" id="GO:0010039">
    <property type="term" value="P:response to iron ion"/>
    <property type="evidence" value="ECO:0000270"/>
    <property type="project" value="TAIR"/>
</dbReference>
<dbReference type="FunFam" id="2.60.120.330:FF:000023">
    <property type="entry name" value="Feruloyl CoA ortho-hydroxylase 1"/>
    <property type="match status" value="1"/>
</dbReference>
<dbReference type="Gene3D" id="2.60.120.330">
    <property type="entry name" value="B-lactam Antibiotic, Isopenicillin N Synthase, Chain"/>
    <property type="match status" value="1"/>
</dbReference>
<dbReference type="InterPro" id="IPR026992">
    <property type="entry name" value="DIOX_N"/>
</dbReference>
<dbReference type="InterPro" id="IPR044861">
    <property type="entry name" value="IPNS-like_FE2OG_OXY"/>
</dbReference>
<dbReference type="InterPro" id="IPR027443">
    <property type="entry name" value="IPNS-like_sf"/>
</dbReference>
<dbReference type="InterPro" id="IPR005123">
    <property type="entry name" value="Oxoglu/Fe-dep_dioxygenase_dom"/>
</dbReference>
<dbReference type="PANTHER" id="PTHR10209">
    <property type="entry name" value="OXIDOREDUCTASE, 2OG-FE II OXYGENASE FAMILY PROTEIN"/>
    <property type="match status" value="1"/>
</dbReference>
<dbReference type="PANTHER" id="PTHR10209:SF230">
    <property type="entry name" value="SCOPOLETIN 8-HYDROXYLASE"/>
    <property type="match status" value="1"/>
</dbReference>
<dbReference type="Pfam" id="PF03171">
    <property type="entry name" value="2OG-FeII_Oxy"/>
    <property type="match status" value="1"/>
</dbReference>
<dbReference type="Pfam" id="PF14226">
    <property type="entry name" value="DIOX_N"/>
    <property type="match status" value="1"/>
</dbReference>
<dbReference type="SUPFAM" id="SSF51197">
    <property type="entry name" value="Clavaminate synthase-like"/>
    <property type="match status" value="1"/>
</dbReference>
<dbReference type="PROSITE" id="PS51471">
    <property type="entry name" value="FE2OG_OXY"/>
    <property type="match status" value="1"/>
</dbReference>
<reference key="1">
    <citation type="journal article" date="2000" name="DNA Res.">
        <title>Structural analysis of Arabidopsis thaliana chromosome 3. II. Sequence features of the 4,251,695 bp regions covered by 90 P1, TAC and BAC clones.</title>
        <authorList>
            <person name="Kaneko T."/>
            <person name="Katoh T."/>
            <person name="Sato S."/>
            <person name="Nakamura Y."/>
            <person name="Asamizu E."/>
            <person name="Tabata S."/>
        </authorList>
    </citation>
    <scope>NUCLEOTIDE SEQUENCE [LARGE SCALE GENOMIC DNA]</scope>
    <source>
        <strain>cv. Columbia</strain>
    </source>
</reference>
<reference key="2">
    <citation type="journal article" date="2000" name="Nature">
        <title>Sequence and analysis of chromosome 3 of the plant Arabidopsis thaliana.</title>
        <authorList>
            <person name="Salanoubat M."/>
            <person name="Lemcke K."/>
            <person name="Rieger M."/>
            <person name="Ansorge W."/>
            <person name="Unseld M."/>
            <person name="Fartmann B."/>
            <person name="Valle G."/>
            <person name="Bloecker H."/>
            <person name="Perez-Alonso M."/>
            <person name="Obermaier B."/>
            <person name="Delseny M."/>
            <person name="Boutry M."/>
            <person name="Grivell L.A."/>
            <person name="Mache R."/>
            <person name="Puigdomenech P."/>
            <person name="De Simone V."/>
            <person name="Choisne N."/>
            <person name="Artiguenave F."/>
            <person name="Robert C."/>
            <person name="Brottier P."/>
            <person name="Wincker P."/>
            <person name="Cattolico L."/>
            <person name="Weissenbach J."/>
            <person name="Saurin W."/>
            <person name="Quetier F."/>
            <person name="Schaefer M."/>
            <person name="Mueller-Auer S."/>
            <person name="Gabel C."/>
            <person name="Fuchs M."/>
            <person name="Benes V."/>
            <person name="Wurmbach E."/>
            <person name="Drzonek H."/>
            <person name="Erfle H."/>
            <person name="Jordan N."/>
            <person name="Bangert S."/>
            <person name="Wiedelmann R."/>
            <person name="Kranz H."/>
            <person name="Voss H."/>
            <person name="Holland R."/>
            <person name="Brandt P."/>
            <person name="Nyakatura G."/>
            <person name="Vezzi A."/>
            <person name="D'Angelo M."/>
            <person name="Pallavicini A."/>
            <person name="Toppo S."/>
            <person name="Simionati B."/>
            <person name="Conrad A."/>
            <person name="Hornischer K."/>
            <person name="Kauer G."/>
            <person name="Loehnert T.-H."/>
            <person name="Nordsiek G."/>
            <person name="Reichelt J."/>
            <person name="Scharfe M."/>
            <person name="Schoen O."/>
            <person name="Bargues M."/>
            <person name="Terol J."/>
            <person name="Climent J."/>
            <person name="Navarro P."/>
            <person name="Collado C."/>
            <person name="Perez-Perez A."/>
            <person name="Ottenwaelder B."/>
            <person name="Duchemin D."/>
            <person name="Cooke R."/>
            <person name="Laudie M."/>
            <person name="Berger-Llauro C."/>
            <person name="Purnelle B."/>
            <person name="Masuy D."/>
            <person name="de Haan M."/>
            <person name="Maarse A.C."/>
            <person name="Alcaraz J.-P."/>
            <person name="Cottet A."/>
            <person name="Casacuberta E."/>
            <person name="Monfort A."/>
            <person name="Argiriou A."/>
            <person name="Flores M."/>
            <person name="Liguori R."/>
            <person name="Vitale D."/>
            <person name="Mannhaupt G."/>
            <person name="Haase D."/>
            <person name="Schoof H."/>
            <person name="Rudd S."/>
            <person name="Zaccaria P."/>
            <person name="Mewes H.-W."/>
            <person name="Mayer K.F.X."/>
            <person name="Kaul S."/>
            <person name="Town C.D."/>
            <person name="Koo H.L."/>
            <person name="Tallon L.J."/>
            <person name="Jenkins J."/>
            <person name="Rooney T."/>
            <person name="Rizzo M."/>
            <person name="Walts A."/>
            <person name="Utterback T."/>
            <person name="Fujii C.Y."/>
            <person name="Shea T.P."/>
            <person name="Creasy T.H."/>
            <person name="Haas B."/>
            <person name="Maiti R."/>
            <person name="Wu D."/>
            <person name="Peterson J."/>
            <person name="Van Aken S."/>
            <person name="Pai G."/>
            <person name="Militscher J."/>
            <person name="Sellers P."/>
            <person name="Gill J.E."/>
            <person name="Feldblyum T.V."/>
            <person name="Preuss D."/>
            <person name="Lin X."/>
            <person name="Nierman W.C."/>
            <person name="Salzberg S.L."/>
            <person name="White O."/>
            <person name="Venter J.C."/>
            <person name="Fraser C.M."/>
            <person name="Kaneko T."/>
            <person name="Nakamura Y."/>
            <person name="Sato S."/>
            <person name="Kato T."/>
            <person name="Asamizu E."/>
            <person name="Sasamoto S."/>
            <person name="Kimura T."/>
            <person name="Idesawa K."/>
            <person name="Kawashima K."/>
            <person name="Kishida Y."/>
            <person name="Kiyokawa C."/>
            <person name="Kohara M."/>
            <person name="Matsumoto M."/>
            <person name="Matsuno A."/>
            <person name="Muraki A."/>
            <person name="Nakayama S."/>
            <person name="Nakazaki N."/>
            <person name="Shinpo S."/>
            <person name="Takeuchi C."/>
            <person name="Wada T."/>
            <person name="Watanabe A."/>
            <person name="Yamada M."/>
            <person name="Yasuda M."/>
            <person name="Tabata S."/>
        </authorList>
    </citation>
    <scope>NUCLEOTIDE SEQUENCE [LARGE SCALE GENOMIC DNA]</scope>
    <source>
        <strain>cv. Columbia</strain>
    </source>
</reference>
<reference key="3">
    <citation type="journal article" date="2017" name="Plant J.">
        <title>Araport11: a complete reannotation of the Arabidopsis thaliana reference genome.</title>
        <authorList>
            <person name="Cheng C.Y."/>
            <person name="Krishnakumar V."/>
            <person name="Chan A.P."/>
            <person name="Thibaud-Nissen F."/>
            <person name="Schobel S."/>
            <person name="Town C.D."/>
        </authorList>
    </citation>
    <scope>GENOME REANNOTATION</scope>
    <source>
        <strain>cv. Columbia</strain>
    </source>
</reference>
<reference key="4">
    <citation type="journal article" date="2006" name="Plant Biotechnol. J.">
        <title>Simultaneous high-throughput recombinational cloning of open reading frames in closed and open configurations.</title>
        <authorList>
            <person name="Underwood B.A."/>
            <person name="Vanderhaeghen R."/>
            <person name="Whitford R."/>
            <person name="Town C.D."/>
            <person name="Hilson P."/>
        </authorList>
    </citation>
    <scope>NUCLEOTIDE SEQUENCE [LARGE SCALE MRNA]</scope>
    <source>
        <strain>cv. Columbia</strain>
    </source>
</reference>
<reference key="5">
    <citation type="journal article" date="2018" name="Nat. Chem. Biol.">
        <title>Biosynthesis of redox-active metabolites in response to iron deficiency in plants.</title>
        <authorList>
            <person name="Rajniak J."/>
            <person name="Giehl R.F.H."/>
            <person name="Chang E."/>
            <person name="Murgia I."/>
            <person name="von Wiren N."/>
            <person name="Sattely E.S."/>
        </authorList>
    </citation>
    <scope>FUNCTION</scope>
    <scope>DISRUPTION PHENOTYPE</scope>
    <scope>CATALYTIC ACTIVITY</scope>
    <scope>INDUCTION BY IRON-DEFICIENCY</scope>
    <scope>PATHWAY</scope>
    <scope>TISSUE SPECIFICITY</scope>
    <source>
        <strain>cv. Columbia</strain>
    </source>
</reference>
<accession>Q9LE86</accession>
<accession>A0A178VF14</accession>
<accession>A0MEV7</accession>
<proteinExistence type="evidence at protein level"/>
<organism>
    <name type="scientific">Arabidopsis thaliana</name>
    <name type="common">Mouse-ear cress</name>
    <dbReference type="NCBI Taxonomy" id="3702"/>
    <lineage>
        <taxon>Eukaryota</taxon>
        <taxon>Viridiplantae</taxon>
        <taxon>Streptophyta</taxon>
        <taxon>Embryophyta</taxon>
        <taxon>Tracheophyta</taxon>
        <taxon>Spermatophyta</taxon>
        <taxon>Magnoliopsida</taxon>
        <taxon>eudicotyledons</taxon>
        <taxon>Gunneridae</taxon>
        <taxon>Pentapetalae</taxon>
        <taxon>rosids</taxon>
        <taxon>malvids</taxon>
        <taxon>Brassicales</taxon>
        <taxon>Brassicaceae</taxon>
        <taxon>Camelineae</taxon>
        <taxon>Arabidopsis</taxon>
    </lineage>
</organism>
<comment type="function">
    <text evidence="4">Involved in the pathway of sideretin biosynthesis from feruloyl CoA, a redox-active catecholic metabolite exuded by roots in response to iron deficiency in order to facilitate the uptake of iron; this pathway consists in the successive conversion from feruloyl CoA to scopoletin, from scopoletin to fraxetin and from fraxetin to sideretin. Catalyzes the biosynthesis of fraxetin via scopoletin hydroxylation.</text>
</comment>
<comment type="catalytic activity">
    <reaction evidence="4">
        <text>scopoletin + 2-oxoglutarate + O2 = fraxetin + succinate + CO2</text>
        <dbReference type="Rhea" id="RHEA:57848"/>
        <dbReference type="ChEBI" id="CHEBI:5169"/>
        <dbReference type="ChEBI" id="CHEBI:15379"/>
        <dbReference type="ChEBI" id="CHEBI:16526"/>
        <dbReference type="ChEBI" id="CHEBI:16810"/>
        <dbReference type="ChEBI" id="CHEBI:17488"/>
        <dbReference type="ChEBI" id="CHEBI:30031"/>
        <dbReference type="EC" id="1.14.11.60"/>
    </reaction>
    <physiologicalReaction direction="left-to-right" evidence="4">
        <dbReference type="Rhea" id="RHEA:57849"/>
    </physiologicalReaction>
</comment>
<comment type="cofactor">
    <cofactor evidence="2">
        <name>L-ascorbate</name>
        <dbReference type="ChEBI" id="CHEBI:38290"/>
    </cofactor>
</comment>
<comment type="cofactor">
    <cofactor evidence="3">
        <name>Fe(2+)</name>
        <dbReference type="ChEBI" id="CHEBI:29033"/>
    </cofactor>
    <text evidence="3">Binds 1 Fe(2+) ion per subunit.</text>
</comment>
<comment type="pathway">
    <text evidence="4">Phenylpropanoid metabolism.</text>
</comment>
<comment type="tissue specificity">
    <text evidence="4">Expressed in both primary and lateral roots under iron-deficient conditions, except in apical root zones, and mostly in the root epidermal layer.</text>
</comment>
<comment type="induction">
    <text evidence="4">Strongly induced by iron deficiency, mainly in roots.</text>
</comment>
<comment type="disruption phenotype">
    <text evidence="4">Accumulation of scopoletin, but loss of sideretin root secretion in response to iron deficiency. Impaired iron-uptake ability at elevated pH leading to chlorotic and stunted plants; this phenotype is rescued by fraxetin and sideretin treatments, but not by scopoletin treatment.</text>
</comment>
<comment type="similarity">
    <text evidence="6">Belongs to the iron/ascorbate-dependent oxidoreductase family.</text>
</comment>
<comment type="sequence caution" evidence="6">
    <conflict type="erroneous termination">
        <sequence resource="EMBL-CDS" id="ABK28555"/>
    </conflict>
    <text>Extended C-terminus.</text>
</comment>
<gene>
    <name evidence="5" type="primary">S8H</name>
    <name evidence="8" type="ordered locus">At3g12900</name>
    <name evidence="9" type="ORF">MJM20.4</name>
</gene>
<keyword id="KW-0223">Dioxygenase</keyword>
<keyword id="KW-0408">Iron</keyword>
<keyword id="KW-0479">Metal-binding</keyword>
<keyword id="KW-0560">Oxidoreductase</keyword>
<keyword id="KW-1185">Reference proteome</keyword>